<name>RN169_BOVIN</name>
<comment type="function">
    <text evidence="1">Probable E3 ubiquitin-protein ligase that acts as a regulator of double-strand breaks (DSBs) repair following DNA damage. Functions in a non-canonical fashion to harness RNF168-mediated protein recruitment to DSB-containing chromatin, thereby contributing to regulation of DSB repair pathway utilization. Once recruited to DSB repair sites by recognizing and binding ubiquitin catalyzed by RNF168, competes with TP53BP1 and BRCA1 for association with RNF168-modified chromatin, thereby favouring homologous recombination repair (HRR) and single-strand annealing (SSA) instead of non-homologous end joining (NHEJ) mediated by TP53BP1. E3 ubiquitin-protein ligase activity is not required for regulation of DSBs repair.</text>
</comment>
<comment type="catalytic activity">
    <reaction>
        <text>S-ubiquitinyl-[E2 ubiquitin-conjugating enzyme]-L-cysteine + [acceptor protein]-L-lysine = [E2 ubiquitin-conjugating enzyme]-L-cysteine + N(6)-ubiquitinyl-[acceptor protein]-L-lysine.</text>
        <dbReference type="EC" id="2.3.2.27"/>
    </reaction>
</comment>
<comment type="pathway">
    <text>Protein modification; protein ubiquitination.</text>
</comment>
<comment type="subunit">
    <text evidence="1">Interacts with DYRK1B.</text>
</comment>
<comment type="subcellular location">
    <subcellularLocation>
        <location evidence="1">Chromosome</location>
    </subcellularLocation>
    <subcellularLocation>
        <location evidence="1">Nucleus</location>
        <location evidence="1">Nucleoplasm</location>
    </subcellularLocation>
    <text evidence="1">Localizes to sites of double-strand breaks (DSBs) following DNA damage. Recruited to DSBs via recognition of RNF168-dependent ubiquitin products.</text>
</comment>
<comment type="domain">
    <text evidence="1">The MIU motif (motif interacting with ubiquitin) mediates the interaction with both 'Lys-48'- and 'Lys-63'-linked ubiquitin chains. The UMI motif also mediates interaction with ubiquitin. The specificity for different types of ubiquitin is mediated by juxtaposition of ubiquitin-binding motifs (MIU and UMI motifs) with LR motifs (LRMs).</text>
</comment>
<comment type="PTM">
    <text evidence="1">Phosphorylated by DYRK1A; phosphorylation increases RNF169 ability to block accumulation of TP53BP1 at the DSB sites.</text>
</comment>
<comment type="similarity">
    <text evidence="4">Belongs to the RNF169 family.</text>
</comment>
<feature type="chain" id="PRO_0000418008" description="E3 ubiquitin-protein ligase RNF169">
    <location>
        <begin position="1"/>
        <end position="689"/>
    </location>
</feature>
<feature type="zinc finger region" description="RING-type" evidence="2">
    <location>
        <begin position="49"/>
        <end position="88"/>
    </location>
</feature>
<feature type="region of interest" description="Disordered" evidence="3">
    <location>
        <begin position="95"/>
        <end position="148"/>
    </location>
</feature>
<feature type="region of interest" description="Disordered" evidence="3">
    <location>
        <begin position="178"/>
        <end position="238"/>
    </location>
</feature>
<feature type="region of interest" description="Disordered" evidence="3">
    <location>
        <begin position="268"/>
        <end position="299"/>
    </location>
</feature>
<feature type="region of interest" description="Disordered" evidence="3">
    <location>
        <begin position="489"/>
        <end position="542"/>
    </location>
</feature>
<feature type="short sequence motif" description="UMI motif">
    <location>
        <begin position="186"/>
        <end position="194"/>
    </location>
</feature>
<feature type="short sequence motif" description="MIU motif">
    <location>
        <begin position="646"/>
        <end position="663"/>
    </location>
</feature>
<feature type="short sequence motif" description="LR motif">
    <location>
        <begin position="670"/>
        <end position="682"/>
    </location>
</feature>
<feature type="compositionally biased region" description="Basic and acidic residues" evidence="3">
    <location>
        <begin position="110"/>
        <end position="128"/>
    </location>
</feature>
<feature type="compositionally biased region" description="Basic and acidic residues" evidence="3">
    <location>
        <begin position="178"/>
        <end position="224"/>
    </location>
</feature>
<feature type="compositionally biased region" description="Polar residues" evidence="3">
    <location>
        <begin position="268"/>
        <end position="277"/>
    </location>
</feature>
<feature type="modified residue" description="Phosphoserine" evidence="1">
    <location>
        <position position="228"/>
    </location>
</feature>
<feature type="modified residue" description="Phosphoserine" evidence="1">
    <location>
        <position position="230"/>
    </location>
</feature>
<feature type="modified residue" description="Phosphoserine" evidence="1">
    <location>
        <position position="320"/>
    </location>
</feature>
<feature type="modified residue" description="Phosphoserine" evidence="1">
    <location>
        <position position="384"/>
    </location>
</feature>
<feature type="modified residue" description="Phosphoserine" evidence="1">
    <location>
        <position position="390"/>
    </location>
</feature>
<feature type="modified residue" description="Phosphothreonine" evidence="1">
    <location>
        <position position="391"/>
    </location>
</feature>
<feature type="modified residue" description="Phosphoserine" evidence="1">
    <location>
        <position position="466"/>
    </location>
</feature>
<feature type="modified residue" description="Phosphoserine" evidence="1">
    <location>
        <position position="625"/>
    </location>
</feature>
<feature type="modified residue" description="Phosphoserine" evidence="1">
    <location>
        <position position="674"/>
    </location>
</feature>
<feature type="cross-link" description="Glycyl lysine isopeptide (Lys-Gly) (interchain with G-Cter in SUMO2)" evidence="1">
    <location>
        <position position="267"/>
    </location>
</feature>
<feature type="cross-link" description="Glycyl lysine isopeptide (Lys-Gly) (interchain with G-Cter in SUMO2)" evidence="1">
    <location>
        <position position="343"/>
    </location>
</feature>
<feature type="cross-link" description="Glycyl lysine isopeptide (Lys-Gly) (interchain with G-Cter in SUMO2)" evidence="1">
    <location>
        <position position="492"/>
    </location>
</feature>
<organism>
    <name type="scientific">Bos taurus</name>
    <name type="common">Bovine</name>
    <dbReference type="NCBI Taxonomy" id="9913"/>
    <lineage>
        <taxon>Eukaryota</taxon>
        <taxon>Metazoa</taxon>
        <taxon>Chordata</taxon>
        <taxon>Craniata</taxon>
        <taxon>Vertebrata</taxon>
        <taxon>Euteleostomi</taxon>
        <taxon>Mammalia</taxon>
        <taxon>Eutheria</taxon>
        <taxon>Laurasiatheria</taxon>
        <taxon>Artiodactyla</taxon>
        <taxon>Ruminantia</taxon>
        <taxon>Pecora</taxon>
        <taxon>Bovidae</taxon>
        <taxon>Bovinae</taxon>
        <taxon>Bos</taxon>
    </lineage>
</organism>
<sequence>MSGRAKVAGEEALVGVAAPQPVPAGILDECTNVTVSQPPSPPRPEESDCAGCLETPGEAAALPCGHSLCRGCAQRAADAAGPCCPRCRARGAGWARRRARDDWQADAEVLGERARRGPPERCRPRRDGGAAAAGPRPEQESRAAPAEPEFIFRAPIKLSKPGEFREEYESLRKLREEKLQEEKTSEDQIHKLLPEDTEIGKRKMDEQKKRDEPVVLKTNLEHCPARLSDSENEEPSRGKMIQTHRSAFVSKSSSYSLAFLAGNLNSKMERSQSCSDTGQDRAKSRLRAAPTSKAKATAMTPTSNPIIGVLLSTRNHRCLSAPDLTVEKRLPFSSLSALASLHKPERSISPESNDSISEELNHFKPIVCSPCTPPKRLPDGRVLSPLIIKSTPRNLNRSLQKQTSYEASPRILKKWEQIFQERQIKKTLSKATLTSLAPETGDDLLVSEVTQSNKEKPLLALNTRLSSGQVLSECTGPTAPDLDYFSSVSQTKAEQGSDRKKNTEIPLETCCSSELPVGASGTSLEREQSERSGSSPDAKLDKTRITASMKISAVNSVLPKNSVLGGVLKTKKQLKTVNHFDLPNGVLADNLGDEPLPSLRRGRKRRCKTKHLEQNGSLKKLRQSSGEVGLAPTDPVLREMEQKLQQEEEDRQLALQLQRMFDNERRTVSRRKGSVDQYLLRSSSMAGAK</sequence>
<reference key="1">
    <citation type="journal article" date="2009" name="Genome Biol.">
        <title>A whole-genome assembly of the domestic cow, Bos taurus.</title>
        <authorList>
            <person name="Zimin A.V."/>
            <person name="Delcher A.L."/>
            <person name="Florea L."/>
            <person name="Kelley D.R."/>
            <person name="Schatz M.C."/>
            <person name="Puiu D."/>
            <person name="Hanrahan F."/>
            <person name="Pertea G."/>
            <person name="Van Tassell C.P."/>
            <person name="Sonstegard T.S."/>
            <person name="Marcais G."/>
            <person name="Roberts M."/>
            <person name="Subramanian P."/>
            <person name="Yorke J.A."/>
            <person name="Salzberg S.L."/>
        </authorList>
    </citation>
    <scope>NUCLEOTIDE SEQUENCE [LARGE SCALE GENOMIC DNA]</scope>
    <source>
        <strain>Hereford</strain>
    </source>
</reference>
<accession>F1MRW8</accession>
<protein>
    <recommendedName>
        <fullName>E3 ubiquitin-protein ligase RNF169</fullName>
        <ecNumber>2.3.2.27</ecNumber>
    </recommendedName>
    <alternativeName>
        <fullName>RING finger protein 169</fullName>
    </alternativeName>
    <alternativeName>
        <fullName evidence="4">RING-type E3 ubiquitin transferase RNF169</fullName>
    </alternativeName>
</protein>
<gene>
    <name type="primary">RNF169</name>
</gene>
<dbReference type="EC" id="2.3.2.27"/>
<dbReference type="EMBL" id="DAAA02041058">
    <property type="status" value="NOT_ANNOTATED_CDS"/>
    <property type="molecule type" value="Genomic_DNA"/>
</dbReference>
<dbReference type="EMBL" id="DAAA02041059">
    <property type="status" value="NOT_ANNOTATED_CDS"/>
    <property type="molecule type" value="Genomic_DNA"/>
</dbReference>
<dbReference type="RefSeq" id="XP_002693509.1">
    <property type="nucleotide sequence ID" value="XM_002693463.2"/>
</dbReference>
<dbReference type="RefSeq" id="XP_015322062.1">
    <property type="nucleotide sequence ID" value="XM_015466576.1"/>
</dbReference>
<dbReference type="SMR" id="F1MRW8"/>
<dbReference type="FunCoup" id="F1MRW8">
    <property type="interactions" value="2344"/>
</dbReference>
<dbReference type="STRING" id="9913.ENSBTAP00000000969"/>
<dbReference type="PaxDb" id="9913-ENSBTAP00000000969"/>
<dbReference type="eggNOG" id="KOG4159">
    <property type="taxonomic scope" value="Eukaryota"/>
</dbReference>
<dbReference type="InParanoid" id="F1MRW8"/>
<dbReference type="UniPathway" id="UPA00143"/>
<dbReference type="Proteomes" id="UP000009136">
    <property type="component" value="Unplaced"/>
</dbReference>
<dbReference type="GO" id="GO:0005654">
    <property type="term" value="C:nucleoplasm"/>
    <property type="evidence" value="ECO:0000250"/>
    <property type="project" value="UniProtKB"/>
</dbReference>
<dbReference type="GO" id="GO:0005634">
    <property type="term" value="C:nucleus"/>
    <property type="evidence" value="ECO:0000250"/>
    <property type="project" value="UniProtKB"/>
</dbReference>
<dbReference type="GO" id="GO:0035861">
    <property type="term" value="C:site of double-strand break"/>
    <property type="evidence" value="ECO:0000250"/>
    <property type="project" value="UniProtKB"/>
</dbReference>
<dbReference type="GO" id="GO:0070530">
    <property type="term" value="F:K63-linked polyubiquitin modification-dependent protein binding"/>
    <property type="evidence" value="ECO:0000250"/>
    <property type="project" value="UniProtKB"/>
</dbReference>
<dbReference type="GO" id="GO:0031491">
    <property type="term" value="F:nucleosome binding"/>
    <property type="evidence" value="ECO:0000250"/>
    <property type="project" value="UniProtKB"/>
</dbReference>
<dbReference type="GO" id="GO:0004842">
    <property type="term" value="F:ubiquitin-protein transferase activity"/>
    <property type="evidence" value="ECO:0000318"/>
    <property type="project" value="GO_Central"/>
</dbReference>
<dbReference type="GO" id="GO:0008270">
    <property type="term" value="F:zinc ion binding"/>
    <property type="evidence" value="ECO:0007669"/>
    <property type="project" value="UniProtKB-KW"/>
</dbReference>
<dbReference type="GO" id="GO:0006974">
    <property type="term" value="P:DNA damage response"/>
    <property type="evidence" value="ECO:0000250"/>
    <property type="project" value="UniProtKB"/>
</dbReference>
<dbReference type="GO" id="GO:0006302">
    <property type="term" value="P:double-strand break repair"/>
    <property type="evidence" value="ECO:0000318"/>
    <property type="project" value="GO_Central"/>
</dbReference>
<dbReference type="GO" id="GO:2000780">
    <property type="term" value="P:negative regulation of double-strand break repair"/>
    <property type="evidence" value="ECO:0000250"/>
    <property type="project" value="UniProtKB"/>
</dbReference>
<dbReference type="GO" id="GO:0016567">
    <property type="term" value="P:protein ubiquitination"/>
    <property type="evidence" value="ECO:0007669"/>
    <property type="project" value="UniProtKB-UniPathway"/>
</dbReference>
<dbReference type="CDD" id="cd21951">
    <property type="entry name" value="MIU_RNF169_C"/>
    <property type="match status" value="1"/>
</dbReference>
<dbReference type="CDD" id="cd16551">
    <property type="entry name" value="RING-HC_RNF169"/>
    <property type="match status" value="1"/>
</dbReference>
<dbReference type="CDD" id="cd22264">
    <property type="entry name" value="UDM1_RNF169"/>
    <property type="match status" value="1"/>
</dbReference>
<dbReference type="FunFam" id="3.30.40.10:FF:000676">
    <property type="entry name" value="E3 ubiquitin-protein ligase RNF169"/>
    <property type="match status" value="1"/>
</dbReference>
<dbReference type="Gene3D" id="3.30.40.10">
    <property type="entry name" value="Zinc/RING finger domain, C3HC4 (zinc finger)"/>
    <property type="match status" value="1"/>
</dbReference>
<dbReference type="InterPro" id="IPR051657">
    <property type="entry name" value="RNF168/RNF169_E3_ubiq-ligase"/>
</dbReference>
<dbReference type="InterPro" id="IPR001841">
    <property type="entry name" value="Znf_RING"/>
</dbReference>
<dbReference type="InterPro" id="IPR013083">
    <property type="entry name" value="Znf_RING/FYVE/PHD"/>
</dbReference>
<dbReference type="InterPro" id="IPR017907">
    <property type="entry name" value="Znf_RING_CS"/>
</dbReference>
<dbReference type="PANTHER" id="PTHR23328:SF2">
    <property type="entry name" value="E3 UBIQUITIN-PROTEIN LIGASE RNF169"/>
    <property type="match status" value="1"/>
</dbReference>
<dbReference type="PANTHER" id="PTHR23328">
    <property type="entry name" value="RING-TYPE DOMAIN-CONTAINING PROTEIN"/>
    <property type="match status" value="1"/>
</dbReference>
<dbReference type="Pfam" id="PF13920">
    <property type="entry name" value="zf-C3HC4_3"/>
    <property type="match status" value="1"/>
</dbReference>
<dbReference type="SMART" id="SM00184">
    <property type="entry name" value="RING"/>
    <property type="match status" value="1"/>
</dbReference>
<dbReference type="SUPFAM" id="SSF57850">
    <property type="entry name" value="RING/U-box"/>
    <property type="match status" value="1"/>
</dbReference>
<dbReference type="PROSITE" id="PS00518">
    <property type="entry name" value="ZF_RING_1"/>
    <property type="match status" value="1"/>
</dbReference>
<dbReference type="PROSITE" id="PS50089">
    <property type="entry name" value="ZF_RING_2"/>
    <property type="match status" value="1"/>
</dbReference>
<proteinExistence type="inferred from homology"/>
<evidence type="ECO:0000250" key="1">
    <source>
        <dbReference type="UniProtKB" id="Q8NCN4"/>
    </source>
</evidence>
<evidence type="ECO:0000255" key="2">
    <source>
        <dbReference type="PROSITE-ProRule" id="PRU00175"/>
    </source>
</evidence>
<evidence type="ECO:0000256" key="3">
    <source>
        <dbReference type="SAM" id="MobiDB-lite"/>
    </source>
</evidence>
<evidence type="ECO:0000305" key="4"/>
<keyword id="KW-0158">Chromosome</keyword>
<keyword id="KW-0227">DNA damage</keyword>
<keyword id="KW-0234">DNA repair</keyword>
<keyword id="KW-1017">Isopeptide bond</keyword>
<keyword id="KW-0479">Metal-binding</keyword>
<keyword id="KW-0539">Nucleus</keyword>
<keyword id="KW-0597">Phosphoprotein</keyword>
<keyword id="KW-1185">Reference proteome</keyword>
<keyword id="KW-0808">Transferase</keyword>
<keyword id="KW-0832">Ubl conjugation</keyword>
<keyword id="KW-0833">Ubl conjugation pathway</keyword>
<keyword id="KW-0862">Zinc</keyword>
<keyword id="KW-0863">Zinc-finger</keyword>